<feature type="chain" id="PRO_0000134618" description="Orotidine 5'-phosphate decarboxylase">
    <location>
        <begin position="1"/>
        <end position="222"/>
    </location>
</feature>
<feature type="active site" description="Proton donor" evidence="1">
    <location>
        <position position="61"/>
    </location>
</feature>
<feature type="binding site" evidence="1">
    <location>
        <position position="11"/>
    </location>
    <ligand>
        <name>substrate</name>
    </ligand>
</feature>
<feature type="binding site" evidence="1">
    <location>
        <position position="30"/>
    </location>
    <ligand>
        <name>substrate</name>
    </ligand>
</feature>
<feature type="binding site" evidence="1">
    <location>
        <begin position="59"/>
        <end position="68"/>
    </location>
    <ligand>
        <name>substrate</name>
    </ligand>
</feature>
<feature type="binding site" evidence="1">
    <location>
        <position position="115"/>
    </location>
    <ligand>
        <name>substrate</name>
    </ligand>
</feature>
<feature type="binding site" evidence="1">
    <location>
        <begin position="164"/>
        <end position="174"/>
    </location>
    <ligand>
        <name>substrate</name>
    </ligand>
</feature>
<feature type="binding site" evidence="1">
    <location>
        <position position="187"/>
    </location>
    <ligand>
        <name>substrate</name>
    </ligand>
</feature>
<feature type="binding site" evidence="1">
    <location>
        <position position="188"/>
    </location>
    <ligand>
        <name>substrate</name>
    </ligand>
</feature>
<organism>
    <name type="scientific">Saccharolobus solfataricus (strain ATCC 35092 / DSM 1617 / JCM 11322 / P2)</name>
    <name type="common">Sulfolobus solfataricus</name>
    <dbReference type="NCBI Taxonomy" id="273057"/>
    <lineage>
        <taxon>Archaea</taxon>
        <taxon>Thermoproteota</taxon>
        <taxon>Thermoprotei</taxon>
        <taxon>Sulfolobales</taxon>
        <taxon>Sulfolobaceae</taxon>
        <taxon>Saccharolobus</taxon>
    </lineage>
</organism>
<evidence type="ECO:0000255" key="1">
    <source>
        <dbReference type="HAMAP-Rule" id="MF_01200"/>
    </source>
</evidence>
<comment type="function">
    <text evidence="1">Catalyzes the decarboxylation of orotidine 5'-monophosphate (OMP) to uridine 5'-monophosphate (UMP).</text>
</comment>
<comment type="catalytic activity">
    <reaction evidence="1">
        <text>orotidine 5'-phosphate + H(+) = UMP + CO2</text>
        <dbReference type="Rhea" id="RHEA:11596"/>
        <dbReference type="ChEBI" id="CHEBI:15378"/>
        <dbReference type="ChEBI" id="CHEBI:16526"/>
        <dbReference type="ChEBI" id="CHEBI:57538"/>
        <dbReference type="ChEBI" id="CHEBI:57865"/>
        <dbReference type="EC" id="4.1.1.23"/>
    </reaction>
</comment>
<comment type="pathway">
    <text evidence="1">Pyrimidine metabolism; UMP biosynthesis via de novo pathway; UMP from orotate: step 2/2.</text>
</comment>
<comment type="subunit">
    <text evidence="1">Homodimer.</text>
</comment>
<comment type="similarity">
    <text evidence="1">Belongs to the OMP decarboxylase family. Type 1 subfamily.</text>
</comment>
<reference key="1">
    <citation type="journal article" date="2000" name="Genome">
        <title>Gene content and organization of a 281-kbp contig from the genome of the extremely thermophilic archaeon, Sulfolobus solfataricus P2.</title>
        <authorList>
            <person name="Charlebois R.L."/>
            <person name="Singh R.K."/>
            <person name="Chan-Weiher C.C.-Y."/>
            <person name="Allard G."/>
            <person name="Chow C."/>
            <person name="Confalonieri F."/>
            <person name="Curtis B."/>
            <person name="Duguet M."/>
            <person name="Erauso G."/>
            <person name="Faguy D."/>
            <person name="Gaasterland T."/>
            <person name="Garrett R.A."/>
            <person name="Gordon P."/>
            <person name="Jeffries A.C."/>
            <person name="Kozera C."/>
            <person name="Kushwaha N."/>
            <person name="Lafleur E."/>
            <person name="Medina N."/>
            <person name="Peng X."/>
            <person name="Penny S.L."/>
            <person name="She Q."/>
            <person name="St Jean A."/>
            <person name="van der Oost J."/>
            <person name="Young F."/>
            <person name="Zivanovic Y."/>
            <person name="Doolittle W.F."/>
            <person name="Ragan M.A."/>
            <person name="Sensen C.W."/>
        </authorList>
    </citation>
    <scope>NUCLEOTIDE SEQUENCE [LARGE SCALE GENOMIC DNA]</scope>
    <source>
        <strain>ATCC 35092 / DSM 1617 / JCM 11322 / P2</strain>
    </source>
</reference>
<reference key="2">
    <citation type="journal article" date="2001" name="Proc. Natl. Acad. Sci. U.S.A.">
        <title>The complete genome of the crenarchaeon Sulfolobus solfataricus P2.</title>
        <authorList>
            <person name="She Q."/>
            <person name="Singh R.K."/>
            <person name="Confalonieri F."/>
            <person name="Zivanovic Y."/>
            <person name="Allard G."/>
            <person name="Awayez M.J."/>
            <person name="Chan-Weiher C.C.-Y."/>
            <person name="Clausen I.G."/>
            <person name="Curtis B.A."/>
            <person name="De Moors A."/>
            <person name="Erauso G."/>
            <person name="Fletcher C."/>
            <person name="Gordon P.M.K."/>
            <person name="Heikamp-de Jong I."/>
            <person name="Jeffries A.C."/>
            <person name="Kozera C.J."/>
            <person name="Medina N."/>
            <person name="Peng X."/>
            <person name="Thi-Ngoc H.P."/>
            <person name="Redder P."/>
            <person name="Schenk M.E."/>
            <person name="Theriault C."/>
            <person name="Tolstrup N."/>
            <person name="Charlebois R.L."/>
            <person name="Doolittle W.F."/>
            <person name="Duguet M."/>
            <person name="Gaasterland T."/>
            <person name="Garrett R.A."/>
            <person name="Ragan M.A."/>
            <person name="Sensen C.W."/>
            <person name="Van der Oost J."/>
        </authorList>
    </citation>
    <scope>NUCLEOTIDE SEQUENCE [LARGE SCALE GENOMIC DNA]</scope>
    <source>
        <strain>ATCC 35092 / DSM 1617 / JCM 11322 / P2</strain>
    </source>
</reference>
<dbReference type="EC" id="4.1.1.23" evidence="1"/>
<dbReference type="EMBL" id="Y18930">
    <property type="protein sequence ID" value="CAB57684.1"/>
    <property type="molecule type" value="Genomic_DNA"/>
</dbReference>
<dbReference type="EMBL" id="AE006641">
    <property type="protein sequence ID" value="AAK40927.1"/>
    <property type="molecule type" value="Genomic_DNA"/>
</dbReference>
<dbReference type="PIR" id="H90208">
    <property type="entry name" value="H90208"/>
</dbReference>
<dbReference type="RefSeq" id="WP_009991148.1">
    <property type="nucleotide sequence ID" value="NC_002754.1"/>
</dbReference>
<dbReference type="SMR" id="Q9UX10"/>
<dbReference type="FunCoup" id="Q9UX10">
    <property type="interactions" value="97"/>
</dbReference>
<dbReference type="STRING" id="273057.SSO0616"/>
<dbReference type="PaxDb" id="273057-SSO0616"/>
<dbReference type="EnsemblBacteria" id="AAK40927">
    <property type="protein sequence ID" value="AAK40927"/>
    <property type="gene ID" value="SSO0616"/>
</dbReference>
<dbReference type="KEGG" id="sso:SSO0616"/>
<dbReference type="PATRIC" id="fig|273057.12.peg.624"/>
<dbReference type="eggNOG" id="arCOG00081">
    <property type="taxonomic scope" value="Archaea"/>
</dbReference>
<dbReference type="HOGENOM" id="CLU_067069_2_0_2"/>
<dbReference type="InParanoid" id="Q9UX10"/>
<dbReference type="PhylomeDB" id="Q9UX10"/>
<dbReference type="UniPathway" id="UPA00070">
    <property type="reaction ID" value="UER00120"/>
</dbReference>
<dbReference type="Proteomes" id="UP000001974">
    <property type="component" value="Chromosome"/>
</dbReference>
<dbReference type="GO" id="GO:0005829">
    <property type="term" value="C:cytosol"/>
    <property type="evidence" value="ECO:0000318"/>
    <property type="project" value="GO_Central"/>
</dbReference>
<dbReference type="GO" id="GO:0004590">
    <property type="term" value="F:orotidine-5'-phosphate decarboxylase activity"/>
    <property type="evidence" value="ECO:0000318"/>
    <property type="project" value="GO_Central"/>
</dbReference>
<dbReference type="GO" id="GO:0006207">
    <property type="term" value="P:'de novo' pyrimidine nucleobase biosynthetic process"/>
    <property type="evidence" value="ECO:0000318"/>
    <property type="project" value="GO_Central"/>
</dbReference>
<dbReference type="GO" id="GO:0044205">
    <property type="term" value="P:'de novo' UMP biosynthetic process"/>
    <property type="evidence" value="ECO:0007669"/>
    <property type="project" value="UniProtKB-UniRule"/>
</dbReference>
<dbReference type="CDD" id="cd04725">
    <property type="entry name" value="OMP_decarboxylase_like"/>
    <property type="match status" value="1"/>
</dbReference>
<dbReference type="Gene3D" id="3.20.20.70">
    <property type="entry name" value="Aldolase class I"/>
    <property type="match status" value="1"/>
</dbReference>
<dbReference type="HAMAP" id="MF_01200_A">
    <property type="entry name" value="OMPdecase_type1_A"/>
    <property type="match status" value="1"/>
</dbReference>
<dbReference type="InterPro" id="IPR013785">
    <property type="entry name" value="Aldolase_TIM"/>
</dbReference>
<dbReference type="InterPro" id="IPR014732">
    <property type="entry name" value="OMPdecase"/>
</dbReference>
<dbReference type="InterPro" id="IPR047595">
    <property type="entry name" value="OMPdecase_arc"/>
</dbReference>
<dbReference type="InterPro" id="IPR001754">
    <property type="entry name" value="OMPdeCOase_dom"/>
</dbReference>
<dbReference type="InterPro" id="IPR011060">
    <property type="entry name" value="RibuloseP-bd_barrel"/>
</dbReference>
<dbReference type="PANTHER" id="PTHR32119">
    <property type="entry name" value="OROTIDINE 5'-PHOSPHATE DECARBOXYLASE"/>
    <property type="match status" value="1"/>
</dbReference>
<dbReference type="PANTHER" id="PTHR32119:SF2">
    <property type="entry name" value="OROTIDINE 5'-PHOSPHATE DECARBOXYLASE"/>
    <property type="match status" value="1"/>
</dbReference>
<dbReference type="Pfam" id="PF00215">
    <property type="entry name" value="OMPdecase"/>
    <property type="match status" value="1"/>
</dbReference>
<dbReference type="SMART" id="SM00934">
    <property type="entry name" value="OMPdecase"/>
    <property type="match status" value="1"/>
</dbReference>
<dbReference type="SUPFAM" id="SSF51366">
    <property type="entry name" value="Ribulose-phoshate binding barrel"/>
    <property type="match status" value="1"/>
</dbReference>
<name>PYRF_SACS2</name>
<protein>
    <recommendedName>
        <fullName evidence="1">Orotidine 5'-phosphate decarboxylase</fullName>
        <ecNumber evidence="1">4.1.1.23</ecNumber>
    </recommendedName>
    <alternativeName>
        <fullName evidence="1">OMP decarboxylase</fullName>
        <shortName evidence="1">OMPDCase</shortName>
        <shortName evidence="1">OMPdecase</shortName>
    </alternativeName>
</protein>
<sequence length="222" mass="24701">MLKSRVILAMDKPLSYQVLKEMENELYGIKVGLPLVLDLGVDKTRELLIGLDVEEIIVDFKLADIGYIMKSIVERLSFANSFIAHSFIGVKGSLDELKRYLDANSKNLYLVAVMSHEGWSTLFADYIKNVIREISPKGIVVGGTKLDHITQYRRDFEKMTIVSPGMGSQGGSYGDAVCAGADYEIIGRSIYNAGNPLTALRTINKIIEDKVMKCKGAIFRKK</sequence>
<accession>Q9UX10</accession>
<gene>
    <name evidence="1" type="primary">pyrF</name>
    <name type="ordered locus">SSO0616</name>
    <name type="ORF">C08_034</name>
</gene>
<proteinExistence type="inferred from homology"/>
<keyword id="KW-0210">Decarboxylase</keyword>
<keyword id="KW-0456">Lyase</keyword>
<keyword id="KW-0665">Pyrimidine biosynthesis</keyword>
<keyword id="KW-1185">Reference proteome</keyword>